<dbReference type="EC" id="5.2.1.8" evidence="2"/>
<dbReference type="EMBL" id="BT020966">
    <property type="protein sequence ID" value="AAX08983.1"/>
    <property type="molecule type" value="mRNA"/>
</dbReference>
<dbReference type="EMBL" id="BC102462">
    <property type="protein sequence ID" value="AAI02463.1"/>
    <property type="molecule type" value="mRNA"/>
</dbReference>
<dbReference type="EMBL" id="D14073">
    <property type="protein sequence ID" value="BAA03158.1"/>
    <property type="status" value="ALT_INIT"/>
    <property type="molecule type" value="mRNA"/>
</dbReference>
<dbReference type="PIR" id="S45724">
    <property type="entry name" value="S45724"/>
</dbReference>
<dbReference type="RefSeq" id="NP_776577.1">
    <property type="nucleotide sequence ID" value="NM_174152.2"/>
</dbReference>
<dbReference type="SMR" id="P80311"/>
<dbReference type="FunCoup" id="P80311">
    <property type="interactions" value="2045"/>
</dbReference>
<dbReference type="STRING" id="9913.ENSBTAP00000022378"/>
<dbReference type="PaxDb" id="9913-ENSBTAP00000022378"/>
<dbReference type="PeptideAtlas" id="P80311"/>
<dbReference type="Ensembl" id="ENSBTAT00000022378.6">
    <property type="protein sequence ID" value="ENSBTAP00000022378.4"/>
    <property type="gene ID" value="ENSBTAG00000016822.7"/>
</dbReference>
<dbReference type="GeneID" id="281419"/>
<dbReference type="KEGG" id="bta:281419"/>
<dbReference type="CTD" id="5479"/>
<dbReference type="VEuPathDB" id="HostDB:ENSBTAG00000016822"/>
<dbReference type="VGNC" id="VGNC:33195">
    <property type="gene designation" value="PPIB"/>
</dbReference>
<dbReference type="eggNOG" id="KOG0880">
    <property type="taxonomic scope" value="Eukaryota"/>
</dbReference>
<dbReference type="GeneTree" id="ENSGT00940000158007"/>
<dbReference type="HOGENOM" id="CLU_012062_4_2_1"/>
<dbReference type="InParanoid" id="P80311"/>
<dbReference type="OMA" id="ENHEITH"/>
<dbReference type="OrthoDB" id="193499at2759"/>
<dbReference type="TreeFam" id="TF354259"/>
<dbReference type="CD-CODE" id="D7FE2080">
    <property type="entry name" value="Nucleolus"/>
</dbReference>
<dbReference type="Proteomes" id="UP000009136">
    <property type="component" value="Chromosome 10"/>
</dbReference>
<dbReference type="Bgee" id="ENSBTAG00000016822">
    <property type="expression patterns" value="Expressed in granulosa cell and 105 other cell types or tissues"/>
</dbReference>
<dbReference type="GO" id="GO:0005737">
    <property type="term" value="C:cytoplasm"/>
    <property type="evidence" value="ECO:0000318"/>
    <property type="project" value="GO_Central"/>
</dbReference>
<dbReference type="GO" id="GO:0034663">
    <property type="term" value="C:endoplasmic reticulum chaperone complex"/>
    <property type="evidence" value="ECO:0007669"/>
    <property type="project" value="Ensembl"/>
</dbReference>
<dbReference type="GO" id="GO:0005788">
    <property type="term" value="C:endoplasmic reticulum lumen"/>
    <property type="evidence" value="ECO:0007669"/>
    <property type="project" value="UniProtKB-SubCell"/>
</dbReference>
<dbReference type="GO" id="GO:0043231">
    <property type="term" value="C:intracellular membrane-bounded organelle"/>
    <property type="evidence" value="ECO:0000318"/>
    <property type="project" value="GO_Central"/>
</dbReference>
<dbReference type="GO" id="GO:0042470">
    <property type="term" value="C:melanosome"/>
    <property type="evidence" value="ECO:0007669"/>
    <property type="project" value="UniProtKB-SubCell"/>
</dbReference>
<dbReference type="GO" id="GO:0005654">
    <property type="term" value="C:nucleoplasm"/>
    <property type="evidence" value="ECO:0007669"/>
    <property type="project" value="Ensembl"/>
</dbReference>
<dbReference type="GO" id="GO:0048471">
    <property type="term" value="C:perinuclear region of cytoplasm"/>
    <property type="evidence" value="ECO:0007669"/>
    <property type="project" value="Ensembl"/>
</dbReference>
<dbReference type="GO" id="GO:0032991">
    <property type="term" value="C:protein-containing complex"/>
    <property type="evidence" value="ECO:0000250"/>
    <property type="project" value="CAFA"/>
</dbReference>
<dbReference type="GO" id="GO:0016018">
    <property type="term" value="F:cyclosporin A binding"/>
    <property type="evidence" value="ECO:0000318"/>
    <property type="project" value="GO_Central"/>
</dbReference>
<dbReference type="GO" id="GO:0003755">
    <property type="term" value="F:peptidyl-prolyl cis-trans isomerase activity"/>
    <property type="evidence" value="ECO:0000250"/>
    <property type="project" value="UniProtKB"/>
</dbReference>
<dbReference type="GO" id="GO:0070063">
    <property type="term" value="F:RNA polymerase binding"/>
    <property type="evidence" value="ECO:0007669"/>
    <property type="project" value="Ensembl"/>
</dbReference>
<dbReference type="GO" id="GO:0060348">
    <property type="term" value="P:bone development"/>
    <property type="evidence" value="ECO:0007669"/>
    <property type="project" value="Ensembl"/>
</dbReference>
<dbReference type="GO" id="GO:0061077">
    <property type="term" value="P:chaperone-mediated protein folding"/>
    <property type="evidence" value="ECO:0000250"/>
    <property type="project" value="UniProtKB"/>
</dbReference>
<dbReference type="GO" id="GO:0030593">
    <property type="term" value="P:neutrophil chemotaxis"/>
    <property type="evidence" value="ECO:0007669"/>
    <property type="project" value="Ensembl"/>
</dbReference>
<dbReference type="GO" id="GO:0044829">
    <property type="term" value="P:positive regulation by host of viral genome replication"/>
    <property type="evidence" value="ECO:0007669"/>
    <property type="project" value="Ensembl"/>
</dbReference>
<dbReference type="GO" id="GO:0040018">
    <property type="term" value="P:positive regulation of multicellular organism growth"/>
    <property type="evidence" value="ECO:0007669"/>
    <property type="project" value="Ensembl"/>
</dbReference>
<dbReference type="GO" id="GO:0006457">
    <property type="term" value="P:protein folding"/>
    <property type="evidence" value="ECO:0000318"/>
    <property type="project" value="GO_Central"/>
</dbReference>
<dbReference type="GO" id="GO:0050821">
    <property type="term" value="P:protein stabilization"/>
    <property type="evidence" value="ECO:0007669"/>
    <property type="project" value="Ensembl"/>
</dbReference>
<dbReference type="CDD" id="cd01926">
    <property type="entry name" value="cyclophilin_ABH_like"/>
    <property type="match status" value="1"/>
</dbReference>
<dbReference type="FunFam" id="2.40.100.10:FF:000001">
    <property type="entry name" value="Peptidyl-prolyl cis-trans isomerase"/>
    <property type="match status" value="1"/>
</dbReference>
<dbReference type="Gene3D" id="2.40.100.10">
    <property type="entry name" value="Cyclophilin-like"/>
    <property type="match status" value="1"/>
</dbReference>
<dbReference type="InterPro" id="IPR029000">
    <property type="entry name" value="Cyclophilin-like_dom_sf"/>
</dbReference>
<dbReference type="InterPro" id="IPR020892">
    <property type="entry name" value="Cyclophilin-type_PPIase_CS"/>
</dbReference>
<dbReference type="InterPro" id="IPR002130">
    <property type="entry name" value="Cyclophilin-type_PPIase_dom"/>
</dbReference>
<dbReference type="PANTHER" id="PTHR11071">
    <property type="entry name" value="PEPTIDYL-PROLYL CIS-TRANS ISOMERASE"/>
    <property type="match status" value="1"/>
</dbReference>
<dbReference type="PANTHER" id="PTHR11071:SF477">
    <property type="entry name" value="PEPTIDYL-PROLYL CIS-TRANS ISOMERASE B"/>
    <property type="match status" value="1"/>
</dbReference>
<dbReference type="Pfam" id="PF00160">
    <property type="entry name" value="Pro_isomerase"/>
    <property type="match status" value="1"/>
</dbReference>
<dbReference type="PRINTS" id="PR00153">
    <property type="entry name" value="CSAPPISMRASE"/>
</dbReference>
<dbReference type="SUPFAM" id="SSF50891">
    <property type="entry name" value="Cyclophilin-like"/>
    <property type="match status" value="1"/>
</dbReference>
<dbReference type="PROSITE" id="PS00170">
    <property type="entry name" value="CSA_PPIASE_1"/>
    <property type="match status" value="1"/>
</dbReference>
<dbReference type="PROSITE" id="PS50072">
    <property type="entry name" value="CSA_PPIASE_2"/>
    <property type="match status" value="1"/>
</dbReference>
<proteinExistence type="evidence at protein level"/>
<protein>
    <recommendedName>
        <fullName>Peptidyl-prolyl cis-trans isomerase B</fullName>
        <shortName>PPIase B</shortName>
        <ecNumber evidence="2">5.2.1.8</ecNumber>
    </recommendedName>
    <alternativeName>
        <fullName>Cyclophilin B</fullName>
    </alternativeName>
    <alternativeName>
        <fullName>Rotamase B</fullName>
    </alternativeName>
    <alternativeName>
        <fullName>S-cyclophilin</fullName>
        <shortName>SCYLP</shortName>
    </alternativeName>
</protein>
<keyword id="KW-0007">Acetylation</keyword>
<keyword id="KW-0903">Direct protein sequencing</keyword>
<keyword id="KW-0256">Endoplasmic reticulum</keyword>
<keyword id="KW-0413">Isomerase</keyword>
<keyword id="KW-1185">Reference proteome</keyword>
<keyword id="KW-0697">Rotamase</keyword>
<keyword id="KW-0702">S-nitrosylation</keyword>
<keyword id="KW-0732">Signal</keyword>
<accession>P80311</accession>
<accession>Q5E9F4</accession>
<reference key="1">
    <citation type="journal article" date="2005" name="BMC Genomics">
        <title>Characterization of 954 bovine full-CDS cDNA sequences.</title>
        <authorList>
            <person name="Harhay G.P."/>
            <person name="Sonstegard T.S."/>
            <person name="Keele J.W."/>
            <person name="Heaton M.P."/>
            <person name="Clawson M.L."/>
            <person name="Snelling W.M."/>
            <person name="Wiedmann R.T."/>
            <person name="Van Tassell C.P."/>
            <person name="Smith T.P.L."/>
        </authorList>
    </citation>
    <scope>NUCLEOTIDE SEQUENCE [LARGE SCALE MRNA]</scope>
</reference>
<reference key="2">
    <citation type="submission" date="2005-08" db="EMBL/GenBank/DDBJ databases">
        <authorList>
            <consortium name="NIH - Mammalian Gene Collection (MGC) project"/>
        </authorList>
    </citation>
    <scope>NUCLEOTIDE SEQUENCE [LARGE SCALE MRNA]</scope>
    <source>
        <strain>Crossbred X Angus</strain>
        <tissue>Ileum</tissue>
    </source>
</reference>
<reference key="3">
    <citation type="submission" date="1993-01" db="EMBL/GenBank/DDBJ databases">
        <title>The bovine homologue of CyP B.</title>
        <authorList>
            <person name="Carrello A."/>
            <person name="Mark P.J."/>
            <person name="House A.K."/>
            <person name="Ratajczak T."/>
        </authorList>
    </citation>
    <scope>NUCLEOTIDE SEQUENCE [MRNA] OF 5-216</scope>
    <source>
        <tissue>Uterus</tissue>
    </source>
</reference>
<reference key="4">
    <citation type="journal article" date="1994" name="FEBS Lett.">
        <title>Cyclophilin-B is an abundant protein whose conformation is similar to cyclophilin-A.</title>
        <authorList>
            <person name="Galat A."/>
            <person name="Bouet F."/>
        </authorList>
    </citation>
    <scope>PROTEIN SEQUENCE OF 34-79</scope>
    <source>
        <tissue>Brain</tissue>
    </source>
</reference>
<reference key="5">
    <citation type="journal article" date="1994" name="Biochem. J.">
        <title>The characterization of a cyclophilin-type peptidyl prolyl cis-trans-isomerase from the endoplasmic-reticulum lumen.</title>
        <authorList>
            <person name="Bose S."/>
            <person name="Muecke M."/>
            <person name="Freedman R.B."/>
        </authorList>
    </citation>
    <scope>PROTEIN SEQUENCE OF 34-53</scope>
</reference>
<comment type="function">
    <text evidence="2">PPIase that catalyzes the cis-trans isomerization of proline imidic peptide bonds in oligopeptides and may therefore assist protein folding.</text>
</comment>
<comment type="catalytic activity">
    <reaction evidence="2">
        <text>[protein]-peptidylproline (omega=180) = [protein]-peptidylproline (omega=0)</text>
        <dbReference type="Rhea" id="RHEA:16237"/>
        <dbReference type="Rhea" id="RHEA-COMP:10747"/>
        <dbReference type="Rhea" id="RHEA-COMP:10748"/>
        <dbReference type="ChEBI" id="CHEBI:83833"/>
        <dbReference type="ChEBI" id="CHEBI:83834"/>
        <dbReference type="EC" id="5.2.1.8"/>
    </reaction>
</comment>
<comment type="activity regulation">
    <text evidence="2">Inhibited by cyclosporin A (CsA).</text>
</comment>
<comment type="subunit">
    <text evidence="2">Interacts with DYM. Interacts with CALR, CLGN and CANX. Part of a large chaperone multiprotein complex comprising DNAJB11, HSP90B1, HSPA5, HYOU, PDIA2, PDIA4, PDIA6, PPIB, SDF2L1, UGGT1 and very small amounts of ERP29, but not, or at very low levels, CALR nor CANX.</text>
</comment>
<comment type="subcellular location">
    <subcellularLocation>
        <location evidence="2">Endoplasmic reticulum lumen</location>
    </subcellularLocation>
    <subcellularLocation>
        <location evidence="2">Melanosome</location>
    </subcellularLocation>
</comment>
<comment type="similarity">
    <text evidence="8">Belongs to the cyclophilin-type PPIase family. PPIase B subfamily.</text>
</comment>
<comment type="caution">
    <text evidence="8">It is uncertain whether Met-1 or Met-9 is the initiator.</text>
</comment>
<comment type="sequence caution" evidence="8">
    <conflict type="erroneous initiation">
        <sequence resource="EMBL-CDS" id="BAA03158"/>
    </conflict>
</comment>
<organism>
    <name type="scientific">Bos taurus</name>
    <name type="common">Bovine</name>
    <dbReference type="NCBI Taxonomy" id="9913"/>
    <lineage>
        <taxon>Eukaryota</taxon>
        <taxon>Metazoa</taxon>
        <taxon>Chordata</taxon>
        <taxon>Craniata</taxon>
        <taxon>Vertebrata</taxon>
        <taxon>Euteleostomi</taxon>
        <taxon>Mammalia</taxon>
        <taxon>Eutheria</taxon>
        <taxon>Laurasiatheria</taxon>
        <taxon>Artiodactyla</taxon>
        <taxon>Ruminantia</taxon>
        <taxon>Pecora</taxon>
        <taxon>Bovidae</taxon>
        <taxon>Bovinae</taxon>
        <taxon>Bos</taxon>
    </lineage>
</organism>
<sequence length="216" mass="23744">MLRLSERNMKILFVAALVVGSVFFLLLPGPSAADEKKKGPKVTVKVYFDLRIGDEDIGRVVIGLFGKTVPKTVDNFVALATGEKGFGYKDSKFHRVIKDFMIQGGDFTRGDGTGGKSIYGERFPDENFKLKHYGPGWVSMANAGKDTNGSQFFITTVKTAWLDGKHVVFGKVLEGMDVVRKVESTKTDGRDKPLKDVTIADCGKIEVEKPFAIAKE</sequence>
<feature type="signal peptide" evidence="6 7">
    <location>
        <begin position="1"/>
        <end position="33"/>
    </location>
</feature>
<feature type="chain" id="PRO_0000025478" description="Peptidyl-prolyl cis-trans isomerase B">
    <location>
        <begin position="34"/>
        <end position="216"/>
    </location>
</feature>
<feature type="domain" description="PPIase cyclophilin-type" evidence="5">
    <location>
        <begin position="47"/>
        <end position="204"/>
    </location>
</feature>
<feature type="short sequence motif" description="Prevents secretion from ER" evidence="1">
    <location>
        <begin position="213"/>
        <end position="216"/>
    </location>
</feature>
<feature type="modified residue" description="N6-succinyllysine" evidence="4">
    <location>
        <position position="84"/>
    </location>
</feature>
<feature type="modified residue" description="N6-acetyllysine" evidence="4">
    <location>
        <position position="165"/>
    </location>
</feature>
<feature type="modified residue" description="S-nitrosocysteine" evidence="4">
    <location>
        <position position="202"/>
    </location>
</feature>
<feature type="modified residue" description="N6-acetyllysine; alternate" evidence="3">
    <location>
        <position position="209"/>
    </location>
</feature>
<feature type="modified residue" description="N6-succinyllysine; alternate" evidence="3">
    <location>
        <position position="209"/>
    </location>
</feature>
<feature type="sequence conflict" description="In Ref. 5; AA sequence." evidence="8" ref="5">
    <original>K</original>
    <variation>G</variation>
    <location>
        <position position="38"/>
    </location>
</feature>
<feature type="sequence conflict" description="In Ref. 3; BAA03158." evidence="8" ref="3">
    <original>V</original>
    <variation>G</variation>
    <location>
        <position position="168"/>
    </location>
</feature>
<gene>
    <name type="primary">PPIB</name>
</gene>
<name>PPIB_BOVIN</name>
<evidence type="ECO:0000250" key="1"/>
<evidence type="ECO:0000250" key="2">
    <source>
        <dbReference type="UniProtKB" id="P23284"/>
    </source>
</evidence>
<evidence type="ECO:0000250" key="3">
    <source>
        <dbReference type="UniProtKB" id="P24369"/>
    </source>
</evidence>
<evidence type="ECO:0000250" key="4">
    <source>
        <dbReference type="UniProtKB" id="Q99KR7"/>
    </source>
</evidence>
<evidence type="ECO:0000255" key="5">
    <source>
        <dbReference type="PROSITE-ProRule" id="PRU00156"/>
    </source>
</evidence>
<evidence type="ECO:0000269" key="6">
    <source>
    </source>
</evidence>
<evidence type="ECO:0000269" key="7">
    <source>
    </source>
</evidence>
<evidence type="ECO:0000305" key="8"/>